<feature type="chain" id="PRO_1000063744" description="3-isopropylmalate dehydratase small subunit">
    <location>
        <begin position="1"/>
        <end position="216"/>
    </location>
</feature>
<comment type="function">
    <text evidence="1">Catalyzes the isomerization between 2-isopropylmalate and 3-isopropylmalate, via the formation of 2-isopropylmaleate.</text>
</comment>
<comment type="catalytic activity">
    <reaction evidence="1">
        <text>(2R,3S)-3-isopropylmalate = (2S)-2-isopropylmalate</text>
        <dbReference type="Rhea" id="RHEA:32287"/>
        <dbReference type="ChEBI" id="CHEBI:1178"/>
        <dbReference type="ChEBI" id="CHEBI:35121"/>
        <dbReference type="EC" id="4.2.1.33"/>
    </reaction>
</comment>
<comment type="pathway">
    <text evidence="1">Amino-acid biosynthesis; L-leucine biosynthesis; L-leucine from 3-methyl-2-oxobutanoate: step 2/4.</text>
</comment>
<comment type="subunit">
    <text evidence="1">Heterodimer of LeuC and LeuD.</text>
</comment>
<comment type="similarity">
    <text evidence="1">Belongs to the LeuD family. LeuD type 1 subfamily.</text>
</comment>
<accession>A3P7N7</accession>
<proteinExistence type="inferred from homology"/>
<evidence type="ECO:0000255" key="1">
    <source>
        <dbReference type="HAMAP-Rule" id="MF_01031"/>
    </source>
</evidence>
<sequence length="216" mass="24726">MEKFNVHTGVVAPLDRENVDTDAIIPKQFLKSIKRTGFGPNAFDEWRYLDHGEPGQDNSKRPLNPDFVLNQPRYQGASVLLARKNFGCGSSREHAPWALQQYGFRAIVAPSFADIFFNNCYKNGLLPIVLTEQQVDHLFNDTYAFNGYQLTIDLDAQVVRAPDGREYPFEITAFRKYCLLNGFDDIGLTLRHADKIRQFEAERLAKQPWLDNRLVG</sequence>
<gene>
    <name evidence="1" type="primary">leuD</name>
    <name type="ordered locus">BURPS1106A_A2314</name>
</gene>
<keyword id="KW-0028">Amino-acid biosynthesis</keyword>
<keyword id="KW-0100">Branched-chain amino acid biosynthesis</keyword>
<keyword id="KW-0432">Leucine biosynthesis</keyword>
<keyword id="KW-0456">Lyase</keyword>
<reference key="1">
    <citation type="journal article" date="2010" name="Genome Biol. Evol.">
        <title>Continuing evolution of Burkholderia mallei through genome reduction and large-scale rearrangements.</title>
        <authorList>
            <person name="Losada L."/>
            <person name="Ronning C.M."/>
            <person name="DeShazer D."/>
            <person name="Woods D."/>
            <person name="Fedorova N."/>
            <person name="Kim H.S."/>
            <person name="Shabalina S.A."/>
            <person name="Pearson T.R."/>
            <person name="Brinkac L."/>
            <person name="Tan P."/>
            <person name="Nandi T."/>
            <person name="Crabtree J."/>
            <person name="Badger J."/>
            <person name="Beckstrom-Sternberg S."/>
            <person name="Saqib M."/>
            <person name="Schutzer S.E."/>
            <person name="Keim P."/>
            <person name="Nierman W.C."/>
        </authorList>
    </citation>
    <scope>NUCLEOTIDE SEQUENCE [LARGE SCALE GENOMIC DNA]</scope>
    <source>
        <strain>1106a</strain>
    </source>
</reference>
<protein>
    <recommendedName>
        <fullName evidence="1">3-isopropylmalate dehydratase small subunit</fullName>
        <ecNumber evidence="1">4.2.1.33</ecNumber>
    </recommendedName>
    <alternativeName>
        <fullName evidence="1">Alpha-IPM isomerase</fullName>
        <shortName evidence="1">IPMI</shortName>
    </alternativeName>
    <alternativeName>
        <fullName evidence="1">Isopropylmalate isomerase</fullName>
    </alternativeName>
</protein>
<dbReference type="EC" id="4.2.1.33" evidence="1"/>
<dbReference type="EMBL" id="CP000573">
    <property type="protein sequence ID" value="ABN94287.1"/>
    <property type="molecule type" value="Genomic_DNA"/>
</dbReference>
<dbReference type="RefSeq" id="WP_004187882.1">
    <property type="nucleotide sequence ID" value="NC_009078.1"/>
</dbReference>
<dbReference type="SMR" id="A3P7N7"/>
<dbReference type="GeneID" id="93063904"/>
<dbReference type="KEGG" id="bpl:BURPS1106A_A2314"/>
<dbReference type="HOGENOM" id="CLU_081378_0_3_4"/>
<dbReference type="UniPathway" id="UPA00048">
    <property type="reaction ID" value="UER00071"/>
</dbReference>
<dbReference type="Proteomes" id="UP000006738">
    <property type="component" value="Chromosome II"/>
</dbReference>
<dbReference type="GO" id="GO:0009316">
    <property type="term" value="C:3-isopropylmalate dehydratase complex"/>
    <property type="evidence" value="ECO:0007669"/>
    <property type="project" value="InterPro"/>
</dbReference>
<dbReference type="GO" id="GO:0003861">
    <property type="term" value="F:3-isopropylmalate dehydratase activity"/>
    <property type="evidence" value="ECO:0007669"/>
    <property type="project" value="UniProtKB-UniRule"/>
</dbReference>
<dbReference type="GO" id="GO:0009098">
    <property type="term" value="P:L-leucine biosynthetic process"/>
    <property type="evidence" value="ECO:0007669"/>
    <property type="project" value="UniProtKB-UniRule"/>
</dbReference>
<dbReference type="CDD" id="cd01577">
    <property type="entry name" value="IPMI_Swivel"/>
    <property type="match status" value="1"/>
</dbReference>
<dbReference type="FunFam" id="3.20.19.10:FF:000003">
    <property type="entry name" value="3-isopropylmalate dehydratase small subunit"/>
    <property type="match status" value="1"/>
</dbReference>
<dbReference type="Gene3D" id="3.20.19.10">
    <property type="entry name" value="Aconitase, domain 4"/>
    <property type="match status" value="1"/>
</dbReference>
<dbReference type="HAMAP" id="MF_01031">
    <property type="entry name" value="LeuD_type1"/>
    <property type="match status" value="1"/>
</dbReference>
<dbReference type="InterPro" id="IPR004431">
    <property type="entry name" value="3-IsopropMal_deHydase_ssu"/>
</dbReference>
<dbReference type="InterPro" id="IPR015928">
    <property type="entry name" value="Aconitase/3IPM_dehydase_swvl"/>
</dbReference>
<dbReference type="InterPro" id="IPR000573">
    <property type="entry name" value="AconitaseA/IPMdHydase_ssu_swvl"/>
</dbReference>
<dbReference type="InterPro" id="IPR033940">
    <property type="entry name" value="IPMI_Swivel"/>
</dbReference>
<dbReference type="InterPro" id="IPR050075">
    <property type="entry name" value="LeuD"/>
</dbReference>
<dbReference type="NCBIfam" id="TIGR00171">
    <property type="entry name" value="leuD"/>
    <property type="match status" value="1"/>
</dbReference>
<dbReference type="NCBIfam" id="NF002458">
    <property type="entry name" value="PRK01641.1"/>
    <property type="match status" value="1"/>
</dbReference>
<dbReference type="PANTHER" id="PTHR43345:SF5">
    <property type="entry name" value="3-ISOPROPYLMALATE DEHYDRATASE SMALL SUBUNIT"/>
    <property type="match status" value="1"/>
</dbReference>
<dbReference type="PANTHER" id="PTHR43345">
    <property type="entry name" value="3-ISOPROPYLMALATE DEHYDRATASE SMALL SUBUNIT 2-RELATED-RELATED"/>
    <property type="match status" value="1"/>
</dbReference>
<dbReference type="Pfam" id="PF00694">
    <property type="entry name" value="Aconitase_C"/>
    <property type="match status" value="1"/>
</dbReference>
<dbReference type="SUPFAM" id="SSF52016">
    <property type="entry name" value="LeuD/IlvD-like"/>
    <property type="match status" value="1"/>
</dbReference>
<name>LEUD_BURP0</name>
<organism>
    <name type="scientific">Burkholderia pseudomallei (strain 1106a)</name>
    <dbReference type="NCBI Taxonomy" id="357348"/>
    <lineage>
        <taxon>Bacteria</taxon>
        <taxon>Pseudomonadati</taxon>
        <taxon>Pseudomonadota</taxon>
        <taxon>Betaproteobacteria</taxon>
        <taxon>Burkholderiales</taxon>
        <taxon>Burkholderiaceae</taxon>
        <taxon>Burkholderia</taxon>
        <taxon>pseudomallei group</taxon>
    </lineage>
</organism>